<organism>
    <name type="scientific">Helicobacter pylori (strain J99 / ATCC 700824)</name>
    <name type="common">Campylobacter pylori J99</name>
    <dbReference type="NCBI Taxonomy" id="85963"/>
    <lineage>
        <taxon>Bacteria</taxon>
        <taxon>Pseudomonadati</taxon>
        <taxon>Campylobacterota</taxon>
        <taxon>Epsilonproteobacteria</taxon>
        <taxon>Campylobacterales</taxon>
        <taxon>Helicobacteraceae</taxon>
        <taxon>Helicobacter</taxon>
    </lineage>
</organism>
<proteinExistence type="inferred from homology"/>
<feature type="chain" id="PRO_0000170351" description="C4-dicarboxylate transporter DcuA">
    <location>
        <begin position="1"/>
        <end position="443"/>
    </location>
</feature>
<feature type="transmembrane region" description="Helical" evidence="2">
    <location>
        <begin position="21"/>
        <end position="41"/>
    </location>
</feature>
<feature type="transmembrane region" description="Helical" evidence="2">
    <location>
        <begin position="46"/>
        <end position="66"/>
    </location>
</feature>
<feature type="transmembrane region" description="Helical" evidence="2">
    <location>
        <begin position="99"/>
        <end position="119"/>
    </location>
</feature>
<feature type="transmembrane region" description="Helical" evidence="2">
    <location>
        <begin position="142"/>
        <end position="162"/>
    </location>
</feature>
<feature type="transmembrane region" description="Helical" evidence="2">
    <location>
        <begin position="171"/>
        <end position="191"/>
    </location>
</feature>
<feature type="transmembrane region" description="Helical" evidence="2">
    <location>
        <begin position="228"/>
        <end position="248"/>
    </location>
</feature>
<feature type="transmembrane region" description="Helical" evidence="2">
    <location>
        <begin position="264"/>
        <end position="284"/>
    </location>
</feature>
<feature type="transmembrane region" description="Helical" evidence="2">
    <location>
        <begin position="295"/>
        <end position="315"/>
    </location>
</feature>
<feature type="transmembrane region" description="Helical" evidence="2">
    <location>
        <begin position="327"/>
        <end position="347"/>
    </location>
</feature>
<feature type="transmembrane region" description="Helical" evidence="2">
    <location>
        <begin position="375"/>
        <end position="395"/>
    </location>
</feature>
<feature type="transmembrane region" description="Helical" evidence="2">
    <location>
        <begin position="419"/>
        <end position="439"/>
    </location>
</feature>
<keyword id="KW-0997">Cell inner membrane</keyword>
<keyword id="KW-1003">Cell membrane</keyword>
<keyword id="KW-0472">Membrane</keyword>
<keyword id="KW-0812">Transmembrane</keyword>
<keyword id="KW-1133">Transmembrane helix</keyword>
<keyword id="KW-0813">Transport</keyword>
<sequence>MVDAFFQIIVLLFSLFLGARLGGLGVGYAGGLGVLILCLFLGLNPGKIPFDVILIIMAVISAISAMQKAGGLDYLVQIAEKILRKHPKQINYLAPSVAYFLTILAGTGHTVFSLIPVIVEVSQSQNIKPKAPLSLAVVSSQVAITASPVSAAVVFMSGILEPLGADYLTLLMVWIPTTFLACMLTAFVMGFTDLKLDSDPNYLERLKAGKISPPMMKKEKETSKSAKLSLWIFIGGVVAIVFYASAISKNIALISPVILGRDYAIVSFMLSVATLIAIFCKINANEIAHSSVFKSGMQACVCVLGVAWLGDTFVSNHIDEIKRYASFLIADYPFLLAVALFLASMLLYSQAATSKALIPSVITALGISANHTEHLYIIVASFASVSALFVLPTYPTLLGAIAMDHTGTTKMGRYVFDHAFLIPGVLVVFLSVALGFVVAPLVL</sequence>
<comment type="function">
    <text evidence="1">Responsible for the transport of C4-dicarboxylates.</text>
</comment>
<comment type="subcellular location">
    <subcellularLocation>
        <location evidence="1">Cell inner membrane</location>
        <topology evidence="2">Multi-pass membrane protein</topology>
    </subcellularLocation>
</comment>
<comment type="similarity">
    <text evidence="3">Belongs to the DcuA/DcuB transporter (TC 2.A.13.1) family.</text>
</comment>
<protein>
    <recommendedName>
        <fullName evidence="1">C4-dicarboxylate transporter DcuA</fullName>
    </recommendedName>
</protein>
<reference key="1">
    <citation type="journal article" date="1999" name="Nature">
        <title>Genomic sequence comparison of two unrelated isolates of the human gastric pathogen Helicobacter pylori.</title>
        <authorList>
            <person name="Alm R.A."/>
            <person name="Ling L.-S.L."/>
            <person name="Moir D.T."/>
            <person name="King B.L."/>
            <person name="Brown E.D."/>
            <person name="Doig P.C."/>
            <person name="Smith D.R."/>
            <person name="Noonan B."/>
            <person name="Guild B.C."/>
            <person name="deJonge B.L."/>
            <person name="Carmel G."/>
            <person name="Tummino P.J."/>
            <person name="Caruso A."/>
            <person name="Uria-Nickelsen M."/>
            <person name="Mills D.M."/>
            <person name="Ives C."/>
            <person name="Gibson R."/>
            <person name="Merberg D."/>
            <person name="Mills S.D."/>
            <person name="Jiang Q."/>
            <person name="Taylor D.E."/>
            <person name="Vovis G.F."/>
            <person name="Trust T.J."/>
        </authorList>
    </citation>
    <scope>NUCLEOTIDE SEQUENCE [LARGE SCALE GENOMIC DNA]</scope>
    <source>
        <strain>J99 / ATCC 700824</strain>
    </source>
</reference>
<dbReference type="EMBL" id="AE001439">
    <property type="protein sequence ID" value="AAD06239.1"/>
    <property type="molecule type" value="Genomic_DNA"/>
</dbReference>
<dbReference type="PIR" id="C71904">
    <property type="entry name" value="C71904"/>
</dbReference>
<dbReference type="RefSeq" id="WP_010882544.1">
    <property type="nucleotide sequence ID" value="NC_000921.1"/>
</dbReference>
<dbReference type="KEGG" id="hpj:jhp_0660"/>
<dbReference type="eggNOG" id="COG2704">
    <property type="taxonomic scope" value="Bacteria"/>
</dbReference>
<dbReference type="Proteomes" id="UP000000804">
    <property type="component" value="Chromosome"/>
</dbReference>
<dbReference type="GO" id="GO:0005886">
    <property type="term" value="C:plasma membrane"/>
    <property type="evidence" value="ECO:0007669"/>
    <property type="project" value="UniProtKB-SubCell"/>
</dbReference>
<dbReference type="GO" id="GO:0015556">
    <property type="term" value="F:C4-dicarboxylate transmembrane transporter activity"/>
    <property type="evidence" value="ECO:0007669"/>
    <property type="project" value="InterPro"/>
</dbReference>
<dbReference type="InterPro" id="IPR004668">
    <property type="entry name" value="Anaer_Dcu_memb_transpt"/>
</dbReference>
<dbReference type="NCBIfam" id="TIGR00770">
    <property type="entry name" value="Dcu"/>
    <property type="match status" value="1"/>
</dbReference>
<dbReference type="NCBIfam" id="NF006927">
    <property type="entry name" value="PRK09412.1"/>
    <property type="match status" value="1"/>
</dbReference>
<dbReference type="NCBIfam" id="NF009136">
    <property type="entry name" value="PRK12489.1"/>
    <property type="match status" value="1"/>
</dbReference>
<dbReference type="PANTHER" id="PTHR36106">
    <property type="entry name" value="ANAEROBIC C4-DICARBOXYLATE TRANSPORTER DCUB"/>
    <property type="match status" value="1"/>
</dbReference>
<dbReference type="PANTHER" id="PTHR36106:SF2">
    <property type="entry name" value="C4-DICARBOXYLATE TRANSPORTER DCUA"/>
    <property type="match status" value="1"/>
</dbReference>
<dbReference type="Pfam" id="PF03605">
    <property type="entry name" value="DcuA_DcuB"/>
    <property type="match status" value="1"/>
</dbReference>
<dbReference type="PIRSF" id="PIRSF004539">
    <property type="entry name" value="C4-dicrbxl_trns"/>
    <property type="match status" value="1"/>
</dbReference>
<accession>Q9ZLC0</accession>
<gene>
    <name type="primary">dcuA</name>
    <name type="ordered locus">jhp_0660</name>
</gene>
<evidence type="ECO:0000250" key="1">
    <source>
        <dbReference type="UniProtKB" id="P0ABN5"/>
    </source>
</evidence>
<evidence type="ECO:0000255" key="2"/>
<evidence type="ECO:0000305" key="3"/>
<name>DCUA_HELPJ</name>